<keyword id="KW-0067">ATP-binding</keyword>
<keyword id="KW-0143">Chaperone</keyword>
<keyword id="KW-0963">Cytoplasm</keyword>
<keyword id="KW-0903">Direct protein sequencing</keyword>
<keyword id="KW-0325">Glycoprotein</keyword>
<keyword id="KW-0547">Nucleotide-binding</keyword>
<keyword id="KW-0346">Stress response</keyword>
<sequence>GVVDSNDLPLNVSELVSNASDALDKLSSSPCVLVSGKFWDNFGKTZTVEVEDDSAEAKTLSKFLNAALTDKTEEVVRNWKLMNAAELLSEINRLSSSEWQAALR</sequence>
<name>HSP01_PINST</name>
<feature type="chain" id="PRO_0000240628" description="Putative heat shock protein PS1">
    <location>
        <begin position="1" status="less than"/>
        <end position="104" status="greater than"/>
    </location>
</feature>
<feature type="binding site" evidence="1">
    <location>
        <position position="18"/>
    </location>
    <ligand>
        <name>ATP</name>
        <dbReference type="ChEBI" id="CHEBI:30616"/>
    </ligand>
</feature>
<feature type="glycosylation site" description="N-linked (GlcNAc...) asparagine" evidence="2">
    <location>
        <position position="11"/>
    </location>
</feature>
<feature type="glycosylation site" description="N-linked (GlcNAc...) asparagine" evidence="2">
    <location>
        <position position="18"/>
    </location>
</feature>
<feature type="non-consecutive residues" evidence="4">
    <location>
        <begin position="13"/>
        <end position="14"/>
    </location>
</feature>
<feature type="non-consecutive residues" evidence="4">
    <location>
        <begin position="25"/>
        <end position="26"/>
    </location>
</feature>
<feature type="non-consecutive residues" evidence="4">
    <location>
        <begin position="37"/>
        <end position="38"/>
    </location>
</feature>
<feature type="non-consecutive residues" evidence="4">
    <location>
        <begin position="44"/>
        <end position="45"/>
    </location>
</feature>
<feature type="non-consecutive residues" evidence="4">
    <location>
        <begin position="58"/>
        <end position="59"/>
    </location>
</feature>
<feature type="non-consecutive residues" evidence="4">
    <location>
        <begin position="67"/>
        <end position="68"/>
    </location>
</feature>
<feature type="non-consecutive residues" evidence="4">
    <location>
        <begin position="77"/>
        <end position="78"/>
    </location>
</feature>
<feature type="non-consecutive residues" evidence="4">
    <location>
        <begin position="85"/>
        <end position="86"/>
    </location>
</feature>
<feature type="non-consecutive residues" evidence="4">
    <location>
        <begin position="93"/>
        <end position="94"/>
    </location>
</feature>
<feature type="non-terminal residue" evidence="4">
    <location>
        <position position="1"/>
    </location>
</feature>
<feature type="non-terminal residue" evidence="4">
    <location>
        <position position="104"/>
    </location>
</feature>
<reference evidence="5" key="1">
    <citation type="journal article" date="2006" name="Mol. Plant Microbe Interact.">
        <title>Proteomic comparison of needles from blister rust-resistant and susceptible Pinus strobus seedlings reveals upregulation of putative disease resistance proteins.</title>
        <authorList>
            <person name="Smith J.A."/>
            <person name="Blanchette R.A."/>
            <person name="Burnes T.A."/>
            <person name="Jacobs J.J."/>
            <person name="Higgins L."/>
            <person name="Witthuhn B.A."/>
            <person name="David A.J."/>
            <person name="Gillman J.H."/>
        </authorList>
    </citation>
    <scope>PROTEIN SEQUENCE</scope>
    <source>
        <tissue evidence="3">Leaf</tissue>
    </source>
</reference>
<proteinExistence type="evidence at protein level"/>
<accession>P84717</accession>
<comment type="function">
    <text evidence="1">Putative molecular chaperone that may promote the maturation, structural maintenance and proper regulation of specific target proteins.</text>
</comment>
<comment type="subunit">
    <text evidence="1">Homodimer.</text>
</comment>
<comment type="subcellular location">
    <subcellularLocation>
        <location evidence="1">Cytoplasm</location>
    </subcellularLocation>
</comment>
<comment type="miscellaneous">
    <text evidence="3">On the 2D-gel the determined pI of this protein is: 5.6, its MW is: 97.6 kDa.</text>
</comment>
<comment type="similarity">
    <text evidence="2">Belongs to the heat shock protein 90 family.</text>
</comment>
<comment type="caution">
    <text evidence="3">The order of the peptides shown is unknown.</text>
</comment>
<dbReference type="GO" id="GO:0005737">
    <property type="term" value="C:cytoplasm"/>
    <property type="evidence" value="ECO:0007669"/>
    <property type="project" value="UniProtKB-SubCell"/>
</dbReference>
<dbReference type="GO" id="GO:0005524">
    <property type="term" value="F:ATP binding"/>
    <property type="evidence" value="ECO:0007669"/>
    <property type="project" value="UniProtKB-KW"/>
</dbReference>
<evidence type="ECO:0000250" key="1"/>
<evidence type="ECO:0000255" key="2"/>
<evidence type="ECO:0000269" key="3">
    <source>
    </source>
</evidence>
<evidence type="ECO:0000303" key="4">
    <source>
    </source>
</evidence>
<evidence type="ECO:0000305" key="5"/>
<organism>
    <name type="scientific">Pinus strobus</name>
    <name type="common">Eastern white pine</name>
    <dbReference type="NCBI Taxonomy" id="3348"/>
    <lineage>
        <taxon>Eukaryota</taxon>
        <taxon>Viridiplantae</taxon>
        <taxon>Streptophyta</taxon>
        <taxon>Embryophyta</taxon>
        <taxon>Tracheophyta</taxon>
        <taxon>Spermatophyta</taxon>
        <taxon>Pinopsida</taxon>
        <taxon>Pinidae</taxon>
        <taxon>Conifers I</taxon>
        <taxon>Pinales</taxon>
        <taxon>Pinaceae</taxon>
        <taxon>Pinus</taxon>
        <taxon>Pinus subgen. Strobus</taxon>
    </lineage>
</organism>
<protein>
    <recommendedName>
        <fullName>Putative heat shock protein PS1</fullName>
    </recommendedName>
</protein>